<feature type="chain" id="PRO_0000124285" description="Small ribosomal subunit protein uS7">
    <location>
        <begin position="1"/>
        <end position="157"/>
    </location>
</feature>
<comment type="function">
    <text evidence="1">One of the primary rRNA binding proteins, it binds directly to 16S rRNA where it nucleates assembly of the head domain of the 30S subunit. Is located at the subunit interface close to the decoding center, probably blocks exit of the E-site tRNA.</text>
</comment>
<comment type="subunit">
    <text evidence="1">Part of the 30S ribosomal subunit. Contacts proteins S9 and S11.</text>
</comment>
<comment type="similarity">
    <text evidence="1">Belongs to the universal ribosomal protein uS7 family.</text>
</comment>
<accession>Q8F0S5</accession>
<protein>
    <recommendedName>
        <fullName evidence="1">Small ribosomal subunit protein uS7</fullName>
    </recommendedName>
    <alternativeName>
        <fullName evidence="2">30S ribosomal protein S7</fullName>
    </alternativeName>
</protein>
<organism>
    <name type="scientific">Leptospira interrogans serogroup Icterohaemorrhagiae serovar Lai (strain 56601)</name>
    <dbReference type="NCBI Taxonomy" id="189518"/>
    <lineage>
        <taxon>Bacteria</taxon>
        <taxon>Pseudomonadati</taxon>
        <taxon>Spirochaetota</taxon>
        <taxon>Spirochaetia</taxon>
        <taxon>Leptospirales</taxon>
        <taxon>Leptospiraceae</taxon>
        <taxon>Leptospira</taxon>
    </lineage>
</organism>
<reference key="1">
    <citation type="journal article" date="2003" name="Nature">
        <title>Unique physiological and pathogenic features of Leptospira interrogans revealed by whole-genome sequencing.</title>
        <authorList>
            <person name="Ren S.-X."/>
            <person name="Fu G."/>
            <person name="Jiang X.-G."/>
            <person name="Zeng R."/>
            <person name="Miao Y.-G."/>
            <person name="Xu H."/>
            <person name="Zhang Y.-X."/>
            <person name="Xiong H."/>
            <person name="Lu G."/>
            <person name="Lu L.-F."/>
            <person name="Jiang H.-Q."/>
            <person name="Jia J."/>
            <person name="Tu Y.-F."/>
            <person name="Jiang J.-X."/>
            <person name="Gu W.-Y."/>
            <person name="Zhang Y.-Q."/>
            <person name="Cai Z."/>
            <person name="Sheng H.-H."/>
            <person name="Yin H.-F."/>
            <person name="Zhang Y."/>
            <person name="Zhu G.-F."/>
            <person name="Wan M."/>
            <person name="Huang H.-L."/>
            <person name="Qian Z."/>
            <person name="Wang S.-Y."/>
            <person name="Ma W."/>
            <person name="Yao Z.-J."/>
            <person name="Shen Y."/>
            <person name="Qiang B.-Q."/>
            <person name="Xia Q.-C."/>
            <person name="Guo X.-K."/>
            <person name="Danchin A."/>
            <person name="Saint Girons I."/>
            <person name="Somerville R.L."/>
            <person name="Wen Y.-M."/>
            <person name="Shi M.-H."/>
            <person name="Chen Z."/>
            <person name="Xu J.-G."/>
            <person name="Zhao G.-P."/>
        </authorList>
    </citation>
    <scope>NUCLEOTIDE SEQUENCE [LARGE SCALE GENOMIC DNA]</scope>
    <source>
        <strain>56601</strain>
    </source>
</reference>
<proteinExistence type="inferred from homology"/>
<dbReference type="EMBL" id="AE010300">
    <property type="protein sequence ID" value="AAN50614.1"/>
    <property type="molecule type" value="Genomic_DNA"/>
</dbReference>
<dbReference type="RefSeq" id="NP_713596.1">
    <property type="nucleotide sequence ID" value="NC_004342.2"/>
</dbReference>
<dbReference type="RefSeq" id="WP_000091209.1">
    <property type="nucleotide sequence ID" value="NC_004342.2"/>
</dbReference>
<dbReference type="SMR" id="Q8F0S5"/>
<dbReference type="FunCoup" id="Q8F0S5">
    <property type="interactions" value="576"/>
</dbReference>
<dbReference type="STRING" id="189518.LA_3416"/>
<dbReference type="PaxDb" id="189518-LA_3416"/>
<dbReference type="EnsemblBacteria" id="AAN50614">
    <property type="protein sequence ID" value="AAN50614"/>
    <property type="gene ID" value="LA_3416"/>
</dbReference>
<dbReference type="GeneID" id="61144096"/>
<dbReference type="KEGG" id="lil:LA_3416"/>
<dbReference type="PATRIC" id="fig|189518.3.peg.3382"/>
<dbReference type="HOGENOM" id="CLU_072226_1_1_12"/>
<dbReference type="InParanoid" id="Q8F0S5"/>
<dbReference type="OrthoDB" id="9807653at2"/>
<dbReference type="Proteomes" id="UP000001408">
    <property type="component" value="Chromosome I"/>
</dbReference>
<dbReference type="GO" id="GO:0022627">
    <property type="term" value="C:cytosolic small ribosomal subunit"/>
    <property type="evidence" value="ECO:0000318"/>
    <property type="project" value="GO_Central"/>
</dbReference>
<dbReference type="GO" id="GO:0005840">
    <property type="term" value="C:ribosome"/>
    <property type="evidence" value="ECO:0000318"/>
    <property type="project" value="GO_Central"/>
</dbReference>
<dbReference type="GO" id="GO:0003729">
    <property type="term" value="F:mRNA binding"/>
    <property type="evidence" value="ECO:0000318"/>
    <property type="project" value="GO_Central"/>
</dbReference>
<dbReference type="GO" id="GO:0019843">
    <property type="term" value="F:rRNA binding"/>
    <property type="evidence" value="ECO:0000318"/>
    <property type="project" value="GO_Central"/>
</dbReference>
<dbReference type="GO" id="GO:0003735">
    <property type="term" value="F:structural constituent of ribosome"/>
    <property type="evidence" value="ECO:0000318"/>
    <property type="project" value="GO_Central"/>
</dbReference>
<dbReference type="GO" id="GO:0000049">
    <property type="term" value="F:tRNA binding"/>
    <property type="evidence" value="ECO:0007669"/>
    <property type="project" value="UniProtKB-UniRule"/>
</dbReference>
<dbReference type="GO" id="GO:0000028">
    <property type="term" value="P:ribosomal small subunit assembly"/>
    <property type="evidence" value="ECO:0000318"/>
    <property type="project" value="GO_Central"/>
</dbReference>
<dbReference type="GO" id="GO:0006412">
    <property type="term" value="P:translation"/>
    <property type="evidence" value="ECO:0000318"/>
    <property type="project" value="GO_Central"/>
</dbReference>
<dbReference type="CDD" id="cd14869">
    <property type="entry name" value="uS7_Bacteria"/>
    <property type="match status" value="1"/>
</dbReference>
<dbReference type="FunFam" id="1.10.455.10:FF:000001">
    <property type="entry name" value="30S ribosomal protein S7"/>
    <property type="match status" value="1"/>
</dbReference>
<dbReference type="Gene3D" id="1.10.455.10">
    <property type="entry name" value="Ribosomal protein S7 domain"/>
    <property type="match status" value="1"/>
</dbReference>
<dbReference type="HAMAP" id="MF_00480_B">
    <property type="entry name" value="Ribosomal_uS7_B"/>
    <property type="match status" value="1"/>
</dbReference>
<dbReference type="InterPro" id="IPR000235">
    <property type="entry name" value="Ribosomal_uS7"/>
</dbReference>
<dbReference type="InterPro" id="IPR005717">
    <property type="entry name" value="Ribosomal_uS7_bac/org-type"/>
</dbReference>
<dbReference type="InterPro" id="IPR023798">
    <property type="entry name" value="Ribosomal_uS7_dom"/>
</dbReference>
<dbReference type="InterPro" id="IPR036823">
    <property type="entry name" value="Ribosomal_uS7_dom_sf"/>
</dbReference>
<dbReference type="NCBIfam" id="TIGR01029">
    <property type="entry name" value="rpsG_bact"/>
    <property type="match status" value="1"/>
</dbReference>
<dbReference type="PANTHER" id="PTHR11205">
    <property type="entry name" value="RIBOSOMAL PROTEIN S7"/>
    <property type="match status" value="1"/>
</dbReference>
<dbReference type="Pfam" id="PF00177">
    <property type="entry name" value="Ribosomal_S7"/>
    <property type="match status" value="1"/>
</dbReference>
<dbReference type="PIRSF" id="PIRSF002122">
    <property type="entry name" value="RPS7p_RPS7a_RPS5e_RPS7o"/>
    <property type="match status" value="1"/>
</dbReference>
<dbReference type="SUPFAM" id="SSF47973">
    <property type="entry name" value="Ribosomal protein S7"/>
    <property type="match status" value="1"/>
</dbReference>
<gene>
    <name evidence="1" type="primary">rpsG</name>
    <name type="ordered locus">LA_3416</name>
</gene>
<sequence length="157" mass="18073">MSRRRGKVEPRKITPDPVYNDVQVAKFINCLMLSGKKSVAEQLFYDALEIIQKKTGNDPYTTFREALENAKPQVEVKSRRVGGVTYQVPVEVRPERRLALGIRWLIRYSRDRNEKGMAAKLAAEFIEAQKGTGSAIKKKEDIRKMAEANKAFSHYRW</sequence>
<name>RS7_LEPIN</name>
<evidence type="ECO:0000255" key="1">
    <source>
        <dbReference type="HAMAP-Rule" id="MF_00480"/>
    </source>
</evidence>
<evidence type="ECO:0000305" key="2"/>
<keyword id="KW-1185">Reference proteome</keyword>
<keyword id="KW-0687">Ribonucleoprotein</keyword>
<keyword id="KW-0689">Ribosomal protein</keyword>
<keyword id="KW-0694">RNA-binding</keyword>
<keyword id="KW-0699">rRNA-binding</keyword>
<keyword id="KW-0820">tRNA-binding</keyword>